<feature type="chain" id="PRO_0000220180" description="Alkanal monooxygenase beta chain">
    <location>
        <begin position="1"/>
        <end position="326"/>
    </location>
</feature>
<gene>
    <name type="primary">luxB</name>
</gene>
<proteinExistence type="inferred from homology"/>
<name>LUXB_ALIFS</name>
<dbReference type="EC" id="1.14.14.3" evidence="2"/>
<dbReference type="EMBL" id="X06758">
    <property type="protein sequence ID" value="CAA29932.1"/>
    <property type="status" value="ALT_SEQ"/>
    <property type="molecule type" value="Genomic_DNA"/>
</dbReference>
<dbReference type="EMBL" id="U55385">
    <property type="protein sequence ID" value="AAB00443.1"/>
    <property type="molecule type" value="Genomic_DNA"/>
</dbReference>
<dbReference type="EMBL" id="U55819">
    <property type="protein sequence ID" value="AAB00450.1"/>
    <property type="molecule type" value="Genomic_DNA"/>
</dbReference>
<dbReference type="EMBL" id="AF170104">
    <property type="protein sequence ID" value="AAD48478.1"/>
    <property type="molecule type" value="Genomic_DNA"/>
</dbReference>
<dbReference type="PIR" id="S00575">
    <property type="entry name" value="S00575"/>
</dbReference>
<dbReference type="RefSeq" id="WP_005423450.1">
    <property type="nucleotide sequence ID" value="NZ_WOBB01000007.1"/>
</dbReference>
<dbReference type="SMR" id="P19908"/>
<dbReference type="BioCyc" id="MetaCyc:LUXBVIBFI-MONOMER"/>
<dbReference type="BRENDA" id="1.14.14.3">
    <property type="organism ID" value="71"/>
</dbReference>
<dbReference type="GO" id="GO:0005829">
    <property type="term" value="C:cytosol"/>
    <property type="evidence" value="ECO:0007669"/>
    <property type="project" value="TreeGrafter"/>
</dbReference>
<dbReference type="GO" id="GO:0047646">
    <property type="term" value="F:alkanal monooxygenase (FMN-linked) activity"/>
    <property type="evidence" value="ECO:0007669"/>
    <property type="project" value="UniProtKB-EC"/>
</dbReference>
<dbReference type="GO" id="GO:0008218">
    <property type="term" value="P:bioluminescence"/>
    <property type="evidence" value="ECO:0000315"/>
    <property type="project" value="CACAO"/>
</dbReference>
<dbReference type="CDD" id="cd01096">
    <property type="entry name" value="Alkanal_monooxygenase"/>
    <property type="match status" value="1"/>
</dbReference>
<dbReference type="Gene3D" id="3.20.20.30">
    <property type="entry name" value="Luciferase-like domain"/>
    <property type="match status" value="2"/>
</dbReference>
<dbReference type="InterPro" id="IPR033924">
    <property type="entry name" value="Alkanal_monooxygenase"/>
</dbReference>
<dbReference type="InterPro" id="IPR050766">
    <property type="entry name" value="Bact_Lucif_Oxidored"/>
</dbReference>
<dbReference type="InterPro" id="IPR018235">
    <property type="entry name" value="Bacterial_luciferase_CS"/>
</dbReference>
<dbReference type="InterPro" id="IPR011251">
    <property type="entry name" value="Luciferase-like_dom"/>
</dbReference>
<dbReference type="InterPro" id="IPR036661">
    <property type="entry name" value="Luciferase-like_sf"/>
</dbReference>
<dbReference type="InterPro" id="IPR002103">
    <property type="entry name" value="Luciferase_bac/NFP"/>
</dbReference>
<dbReference type="PANTHER" id="PTHR30137:SF8">
    <property type="entry name" value="BLR5498 PROTEIN"/>
    <property type="match status" value="1"/>
</dbReference>
<dbReference type="PANTHER" id="PTHR30137">
    <property type="entry name" value="LUCIFERASE-LIKE MONOOXYGENASE"/>
    <property type="match status" value="1"/>
</dbReference>
<dbReference type="Pfam" id="PF00296">
    <property type="entry name" value="Bac_luciferase"/>
    <property type="match status" value="1"/>
</dbReference>
<dbReference type="PRINTS" id="PR00089">
    <property type="entry name" value="LUCIFERASE"/>
</dbReference>
<dbReference type="SUPFAM" id="SSF51679">
    <property type="entry name" value="Bacterial luciferase-like"/>
    <property type="match status" value="1"/>
</dbReference>
<dbReference type="PROSITE" id="PS00494">
    <property type="entry name" value="BACTERIAL_LUCIFERASE"/>
    <property type="match status" value="1"/>
</dbReference>
<sequence length="326" mass="37357">MKFGLFFLNFQKDGITSEETLDNMVKTVTLIDSTKYHFNTAFVNEHHFSKNGIVGAPITAAGFLLGLTNKLHIGSLNQVITTHHPVRVAEEASLLDQMSEGRFILGFSDCESDFEMEFFRRHISSRQQQFEACYEIINDALTTGYCHPQNDFYDFPKVSINPHCYSENGPKQYVSATSKEVVMWAAKKALPLTFKWEDNLETKERYAILYNKTAQQYGIDISDVDHQLTVIANLNADRSTAQEEVREYLKDYITETYPQMDRDEKINCIIEENAVGSHDDYYESTKLAVEKTGSKNILLSFESMSDIKDVKDIIDMLNQKIEMNLP</sequence>
<protein>
    <recommendedName>
        <fullName>Alkanal monooxygenase beta chain</fullName>
        <ecNumber evidence="2">1.14.14.3</ecNumber>
    </recommendedName>
    <alternativeName>
        <fullName>Bacterial luciferase beta chain</fullName>
    </alternativeName>
</protein>
<keyword id="KW-0285">Flavoprotein</keyword>
<keyword id="KW-0288">FMN</keyword>
<keyword id="KW-0455">Luminescence</keyword>
<keyword id="KW-0503">Monooxygenase</keyword>
<keyword id="KW-0560">Oxidoreductase</keyword>
<keyword id="KW-0599">Photoprotein</keyword>
<accession>P19908</accession>
<reference key="1">
    <citation type="journal article" date="1988" name="Nucleic Acids Res.">
        <title>Nucleotide sequence of the LuxA and LuxB genes of the bioluminescent marine bacterium Vibrio fischeri.</title>
        <authorList>
            <person name="Foran D.R."/>
            <person name="Brown W.M."/>
        </authorList>
    </citation>
    <scope>NUCLEOTIDE SEQUENCE [GENOMIC DNA]</scope>
    <source>
        <strain>MJ-1</strain>
    </source>
</reference>
<reference key="2">
    <citation type="submission" date="1999-07" db="EMBL/GenBank/DDBJ databases">
        <title>Vibrio fischeri Lux operon SalI digest.</title>
        <authorList>
            <person name="Knight T."/>
            <person name="Papadakis N."/>
        </authorList>
    </citation>
    <scope>NUCLEOTIDE SEQUENCE [GENOMIC DNA]</scope>
    <source>
        <strain>MJ-1</strain>
    </source>
</reference>
<evidence type="ECO:0000250" key="1">
    <source>
        <dbReference type="UniProtKB" id="P07740"/>
    </source>
</evidence>
<evidence type="ECO:0000250" key="2">
    <source>
        <dbReference type="UniProtKB" id="P12744"/>
    </source>
</evidence>
<evidence type="ECO:0000305" key="3"/>
<comment type="function">
    <text evidence="2">Light-emitting reaction in luminous bacteria. The specific role of the beta subunit is unknown, but it is absolutely required for bioluminescence activity.</text>
</comment>
<comment type="catalytic activity">
    <reaction evidence="2">
        <text>a long-chain fatty aldehyde + FMNH2 + O2 = a long-chain fatty acid + hnu + FMN + H2O + 2 H(+)</text>
        <dbReference type="Rhea" id="RHEA:17181"/>
        <dbReference type="ChEBI" id="CHEBI:15377"/>
        <dbReference type="ChEBI" id="CHEBI:15378"/>
        <dbReference type="ChEBI" id="CHEBI:15379"/>
        <dbReference type="ChEBI" id="CHEBI:17176"/>
        <dbReference type="ChEBI" id="CHEBI:30212"/>
        <dbReference type="ChEBI" id="CHEBI:57560"/>
        <dbReference type="ChEBI" id="CHEBI:57618"/>
        <dbReference type="ChEBI" id="CHEBI:58210"/>
        <dbReference type="EC" id="1.14.14.3"/>
    </reaction>
</comment>
<comment type="subunit">
    <text evidence="1">Heterodimer of an alpha and a beta chain.</text>
</comment>
<comment type="similarity">
    <text evidence="3">Belongs to the bacterial luciferase oxidoreductase family.</text>
</comment>
<organism>
    <name type="scientific">Aliivibrio fischeri</name>
    <name type="common">Vibrio fischeri</name>
    <dbReference type="NCBI Taxonomy" id="668"/>
    <lineage>
        <taxon>Bacteria</taxon>
        <taxon>Pseudomonadati</taxon>
        <taxon>Pseudomonadota</taxon>
        <taxon>Gammaproteobacteria</taxon>
        <taxon>Vibrionales</taxon>
        <taxon>Vibrionaceae</taxon>
        <taxon>Aliivibrio</taxon>
    </lineage>
</organism>